<organism>
    <name type="scientific">Bacillus subtilis (strain 168)</name>
    <dbReference type="NCBI Taxonomy" id="224308"/>
    <lineage>
        <taxon>Bacteria</taxon>
        <taxon>Bacillati</taxon>
        <taxon>Bacillota</taxon>
        <taxon>Bacilli</taxon>
        <taxon>Bacillales</taxon>
        <taxon>Bacillaceae</taxon>
        <taxon>Bacillus</taxon>
    </lineage>
</organism>
<gene>
    <name type="primary">yqgY</name>
    <name type="ordered locus">BSU24780</name>
</gene>
<accession>P54502</accession>
<comment type="subcellular location">
    <subcellularLocation>
        <location evidence="2">Cell membrane</location>
        <topology evidence="2">Multi-pass membrane protein</topology>
    </subcellularLocation>
</comment>
<proteinExistence type="predicted"/>
<sequence length="81" mass="9422">MNRMFRVLGFWTGIFAVMFYLGDMKDASLLFFGQTILFVFLSYLNLTERMYIYIFGAYLTIFFAGFTYYSIFIMVPGGGGH</sequence>
<protein>
    <recommendedName>
        <fullName>Uncharacterized protein YqgY</fullName>
    </recommendedName>
</protein>
<name>YQGY_BACSU</name>
<dbReference type="EMBL" id="D84432">
    <property type="protein sequence ID" value="BAA12528.1"/>
    <property type="molecule type" value="Genomic_DNA"/>
</dbReference>
<dbReference type="EMBL" id="AL009126">
    <property type="protein sequence ID" value="CAB14409.1"/>
    <property type="molecule type" value="Genomic_DNA"/>
</dbReference>
<dbReference type="PIR" id="B69958">
    <property type="entry name" value="B69958"/>
</dbReference>
<dbReference type="RefSeq" id="NP_390358.1">
    <property type="nucleotide sequence ID" value="NC_000964.3"/>
</dbReference>
<dbReference type="RefSeq" id="WP_003226300.1">
    <property type="nucleotide sequence ID" value="NZ_OZ025638.1"/>
</dbReference>
<dbReference type="SMR" id="P54502"/>
<dbReference type="FunCoup" id="P54502">
    <property type="interactions" value="49"/>
</dbReference>
<dbReference type="STRING" id="224308.BSU24780"/>
<dbReference type="PaxDb" id="224308-BSU24780"/>
<dbReference type="EnsemblBacteria" id="CAB14409">
    <property type="protein sequence ID" value="CAB14409"/>
    <property type="gene ID" value="BSU_24780"/>
</dbReference>
<dbReference type="GeneID" id="938215"/>
<dbReference type="KEGG" id="bsu:BSU24780"/>
<dbReference type="PATRIC" id="fig|224308.179.peg.2697"/>
<dbReference type="eggNOG" id="ENOG5032WUX">
    <property type="taxonomic scope" value="Bacteria"/>
</dbReference>
<dbReference type="InParanoid" id="P54502"/>
<dbReference type="OrthoDB" id="2353516at2"/>
<dbReference type="BioCyc" id="BSUB:BSU24780-MONOMER"/>
<dbReference type="PRO" id="PR:P54502"/>
<dbReference type="Proteomes" id="UP000001570">
    <property type="component" value="Chromosome"/>
</dbReference>
<dbReference type="GO" id="GO:0005886">
    <property type="term" value="C:plasma membrane"/>
    <property type="evidence" value="ECO:0007669"/>
    <property type="project" value="UniProtKB-SubCell"/>
</dbReference>
<dbReference type="InterPro" id="IPR020254">
    <property type="entry name" value="DUF2626"/>
</dbReference>
<dbReference type="Pfam" id="PF11117">
    <property type="entry name" value="DUF2626"/>
    <property type="match status" value="1"/>
</dbReference>
<evidence type="ECO:0000255" key="1"/>
<evidence type="ECO:0000305" key="2"/>
<keyword id="KW-1003">Cell membrane</keyword>
<keyword id="KW-0472">Membrane</keyword>
<keyword id="KW-1185">Reference proteome</keyword>
<keyword id="KW-0812">Transmembrane</keyword>
<keyword id="KW-1133">Transmembrane helix</keyword>
<feature type="chain" id="PRO_0000049816" description="Uncharacterized protein YqgY">
    <location>
        <begin position="1"/>
        <end position="81"/>
    </location>
</feature>
<feature type="transmembrane region" description="Helical" evidence="1">
    <location>
        <begin position="27"/>
        <end position="47"/>
    </location>
</feature>
<feature type="transmembrane region" description="Helical" evidence="1">
    <location>
        <begin position="54"/>
        <end position="74"/>
    </location>
</feature>
<reference key="1">
    <citation type="journal article" date="1996" name="Microbiology">
        <title>Systematic sequencing of the 283 kb 210 degrees-232 degrees region of the Bacillus subtilis genome containing the skin element and many sporulation genes.</title>
        <authorList>
            <person name="Mizuno M."/>
            <person name="Masuda S."/>
            <person name="Takemaru K."/>
            <person name="Hosono S."/>
            <person name="Sato T."/>
            <person name="Takeuchi M."/>
            <person name="Kobayashi Y."/>
        </authorList>
    </citation>
    <scope>NUCLEOTIDE SEQUENCE [GENOMIC DNA]</scope>
    <source>
        <strain>168 / JH642</strain>
    </source>
</reference>
<reference key="2">
    <citation type="journal article" date="1997" name="Nature">
        <title>The complete genome sequence of the Gram-positive bacterium Bacillus subtilis.</title>
        <authorList>
            <person name="Kunst F."/>
            <person name="Ogasawara N."/>
            <person name="Moszer I."/>
            <person name="Albertini A.M."/>
            <person name="Alloni G."/>
            <person name="Azevedo V."/>
            <person name="Bertero M.G."/>
            <person name="Bessieres P."/>
            <person name="Bolotin A."/>
            <person name="Borchert S."/>
            <person name="Borriss R."/>
            <person name="Boursier L."/>
            <person name="Brans A."/>
            <person name="Braun M."/>
            <person name="Brignell S.C."/>
            <person name="Bron S."/>
            <person name="Brouillet S."/>
            <person name="Bruschi C.V."/>
            <person name="Caldwell B."/>
            <person name="Capuano V."/>
            <person name="Carter N.M."/>
            <person name="Choi S.-K."/>
            <person name="Codani J.-J."/>
            <person name="Connerton I.F."/>
            <person name="Cummings N.J."/>
            <person name="Daniel R.A."/>
            <person name="Denizot F."/>
            <person name="Devine K.M."/>
            <person name="Duesterhoeft A."/>
            <person name="Ehrlich S.D."/>
            <person name="Emmerson P.T."/>
            <person name="Entian K.-D."/>
            <person name="Errington J."/>
            <person name="Fabret C."/>
            <person name="Ferrari E."/>
            <person name="Foulger D."/>
            <person name="Fritz C."/>
            <person name="Fujita M."/>
            <person name="Fujita Y."/>
            <person name="Fuma S."/>
            <person name="Galizzi A."/>
            <person name="Galleron N."/>
            <person name="Ghim S.-Y."/>
            <person name="Glaser P."/>
            <person name="Goffeau A."/>
            <person name="Golightly E.J."/>
            <person name="Grandi G."/>
            <person name="Guiseppi G."/>
            <person name="Guy B.J."/>
            <person name="Haga K."/>
            <person name="Haiech J."/>
            <person name="Harwood C.R."/>
            <person name="Henaut A."/>
            <person name="Hilbert H."/>
            <person name="Holsappel S."/>
            <person name="Hosono S."/>
            <person name="Hullo M.-F."/>
            <person name="Itaya M."/>
            <person name="Jones L.-M."/>
            <person name="Joris B."/>
            <person name="Karamata D."/>
            <person name="Kasahara Y."/>
            <person name="Klaerr-Blanchard M."/>
            <person name="Klein C."/>
            <person name="Kobayashi Y."/>
            <person name="Koetter P."/>
            <person name="Koningstein G."/>
            <person name="Krogh S."/>
            <person name="Kumano M."/>
            <person name="Kurita K."/>
            <person name="Lapidus A."/>
            <person name="Lardinois S."/>
            <person name="Lauber J."/>
            <person name="Lazarevic V."/>
            <person name="Lee S.-M."/>
            <person name="Levine A."/>
            <person name="Liu H."/>
            <person name="Masuda S."/>
            <person name="Mauel C."/>
            <person name="Medigue C."/>
            <person name="Medina N."/>
            <person name="Mellado R.P."/>
            <person name="Mizuno M."/>
            <person name="Moestl D."/>
            <person name="Nakai S."/>
            <person name="Noback M."/>
            <person name="Noone D."/>
            <person name="O'Reilly M."/>
            <person name="Ogawa K."/>
            <person name="Ogiwara A."/>
            <person name="Oudega B."/>
            <person name="Park S.-H."/>
            <person name="Parro V."/>
            <person name="Pohl T.M."/>
            <person name="Portetelle D."/>
            <person name="Porwollik S."/>
            <person name="Prescott A.M."/>
            <person name="Presecan E."/>
            <person name="Pujic P."/>
            <person name="Purnelle B."/>
            <person name="Rapoport G."/>
            <person name="Rey M."/>
            <person name="Reynolds S."/>
            <person name="Rieger M."/>
            <person name="Rivolta C."/>
            <person name="Rocha E."/>
            <person name="Roche B."/>
            <person name="Rose M."/>
            <person name="Sadaie Y."/>
            <person name="Sato T."/>
            <person name="Scanlan E."/>
            <person name="Schleich S."/>
            <person name="Schroeter R."/>
            <person name="Scoffone F."/>
            <person name="Sekiguchi J."/>
            <person name="Sekowska A."/>
            <person name="Seror S.J."/>
            <person name="Serror P."/>
            <person name="Shin B.-S."/>
            <person name="Soldo B."/>
            <person name="Sorokin A."/>
            <person name="Tacconi E."/>
            <person name="Takagi T."/>
            <person name="Takahashi H."/>
            <person name="Takemaru K."/>
            <person name="Takeuchi M."/>
            <person name="Tamakoshi A."/>
            <person name="Tanaka T."/>
            <person name="Terpstra P."/>
            <person name="Tognoni A."/>
            <person name="Tosato V."/>
            <person name="Uchiyama S."/>
            <person name="Vandenbol M."/>
            <person name="Vannier F."/>
            <person name="Vassarotti A."/>
            <person name="Viari A."/>
            <person name="Wambutt R."/>
            <person name="Wedler E."/>
            <person name="Wedler H."/>
            <person name="Weitzenegger T."/>
            <person name="Winters P."/>
            <person name="Wipat A."/>
            <person name="Yamamoto H."/>
            <person name="Yamane K."/>
            <person name="Yasumoto K."/>
            <person name="Yata K."/>
            <person name="Yoshida K."/>
            <person name="Yoshikawa H.-F."/>
            <person name="Zumstein E."/>
            <person name="Yoshikawa H."/>
            <person name="Danchin A."/>
        </authorList>
    </citation>
    <scope>NUCLEOTIDE SEQUENCE [LARGE SCALE GENOMIC DNA]</scope>
    <source>
        <strain>168</strain>
    </source>
</reference>